<sequence length="156" mass="17670">MPRRREVPKREVLPDPKFGNVDVAKFMNMLMLSGKKSVAERIVYGAFEQIQTKGGKDPLEVFTVALNNVKPVVEVKSRRVGGANYQVPVEVRPSRRMALAMRWLREAAKKRSEKSMALRLAGELSEAAEGRGGAMKKRDEVHRMAEANRAFSHFRF</sequence>
<accession>Q1BRU4</accession>
<gene>
    <name evidence="1" type="primary">rpsG</name>
    <name type="ordered locus">Bcen_2763</name>
</gene>
<name>RS7_BURO1</name>
<comment type="function">
    <text evidence="1">One of the primary rRNA binding proteins, it binds directly to 16S rRNA where it nucleates assembly of the head domain of the 30S subunit. Is located at the subunit interface close to the decoding center, probably blocks exit of the E-site tRNA.</text>
</comment>
<comment type="subunit">
    <text evidence="1">Part of the 30S ribosomal subunit. Contacts proteins S9 and S11.</text>
</comment>
<comment type="similarity">
    <text evidence="1">Belongs to the universal ribosomal protein uS7 family.</text>
</comment>
<reference key="1">
    <citation type="submission" date="2006-05" db="EMBL/GenBank/DDBJ databases">
        <title>Complete sequence of chromosome 1 of Burkholderia cenocepacia AU 1054.</title>
        <authorList>
            <consortium name="US DOE Joint Genome Institute"/>
            <person name="Copeland A."/>
            <person name="Lucas S."/>
            <person name="Lapidus A."/>
            <person name="Barry K."/>
            <person name="Detter J.C."/>
            <person name="Glavina del Rio T."/>
            <person name="Hammon N."/>
            <person name="Israni S."/>
            <person name="Dalin E."/>
            <person name="Tice H."/>
            <person name="Pitluck S."/>
            <person name="Chain P."/>
            <person name="Malfatti S."/>
            <person name="Shin M."/>
            <person name="Vergez L."/>
            <person name="Schmutz J."/>
            <person name="Larimer F."/>
            <person name="Land M."/>
            <person name="Hauser L."/>
            <person name="Kyrpides N."/>
            <person name="Lykidis A."/>
            <person name="LiPuma J.J."/>
            <person name="Konstantinidis K."/>
            <person name="Tiedje J.M."/>
            <person name="Richardson P."/>
        </authorList>
    </citation>
    <scope>NUCLEOTIDE SEQUENCE [LARGE SCALE GENOMIC DNA]</scope>
    <source>
        <strain>AU 1054</strain>
    </source>
</reference>
<dbReference type="EMBL" id="CP000378">
    <property type="protein sequence ID" value="ABF77661.1"/>
    <property type="molecule type" value="Genomic_DNA"/>
</dbReference>
<dbReference type="SMR" id="Q1BRU4"/>
<dbReference type="HOGENOM" id="CLU_072226_1_1_4"/>
<dbReference type="GO" id="GO:0015935">
    <property type="term" value="C:small ribosomal subunit"/>
    <property type="evidence" value="ECO:0007669"/>
    <property type="project" value="InterPro"/>
</dbReference>
<dbReference type="GO" id="GO:0019843">
    <property type="term" value="F:rRNA binding"/>
    <property type="evidence" value="ECO:0007669"/>
    <property type="project" value="UniProtKB-UniRule"/>
</dbReference>
<dbReference type="GO" id="GO:0003735">
    <property type="term" value="F:structural constituent of ribosome"/>
    <property type="evidence" value="ECO:0007669"/>
    <property type="project" value="InterPro"/>
</dbReference>
<dbReference type="GO" id="GO:0000049">
    <property type="term" value="F:tRNA binding"/>
    <property type="evidence" value="ECO:0007669"/>
    <property type="project" value="UniProtKB-UniRule"/>
</dbReference>
<dbReference type="GO" id="GO:0006412">
    <property type="term" value="P:translation"/>
    <property type="evidence" value="ECO:0007669"/>
    <property type="project" value="UniProtKB-UniRule"/>
</dbReference>
<dbReference type="CDD" id="cd14869">
    <property type="entry name" value="uS7_Bacteria"/>
    <property type="match status" value="1"/>
</dbReference>
<dbReference type="FunFam" id="1.10.455.10:FF:000001">
    <property type="entry name" value="30S ribosomal protein S7"/>
    <property type="match status" value="1"/>
</dbReference>
<dbReference type="Gene3D" id="1.10.455.10">
    <property type="entry name" value="Ribosomal protein S7 domain"/>
    <property type="match status" value="1"/>
</dbReference>
<dbReference type="HAMAP" id="MF_00480_B">
    <property type="entry name" value="Ribosomal_uS7_B"/>
    <property type="match status" value="1"/>
</dbReference>
<dbReference type="InterPro" id="IPR000235">
    <property type="entry name" value="Ribosomal_uS7"/>
</dbReference>
<dbReference type="InterPro" id="IPR005717">
    <property type="entry name" value="Ribosomal_uS7_bac/org-type"/>
</dbReference>
<dbReference type="InterPro" id="IPR020606">
    <property type="entry name" value="Ribosomal_uS7_CS"/>
</dbReference>
<dbReference type="InterPro" id="IPR023798">
    <property type="entry name" value="Ribosomal_uS7_dom"/>
</dbReference>
<dbReference type="InterPro" id="IPR036823">
    <property type="entry name" value="Ribosomal_uS7_dom_sf"/>
</dbReference>
<dbReference type="NCBIfam" id="TIGR01029">
    <property type="entry name" value="rpsG_bact"/>
    <property type="match status" value="1"/>
</dbReference>
<dbReference type="PANTHER" id="PTHR11205">
    <property type="entry name" value="RIBOSOMAL PROTEIN S7"/>
    <property type="match status" value="1"/>
</dbReference>
<dbReference type="Pfam" id="PF00177">
    <property type="entry name" value="Ribosomal_S7"/>
    <property type="match status" value="1"/>
</dbReference>
<dbReference type="PIRSF" id="PIRSF002122">
    <property type="entry name" value="RPS7p_RPS7a_RPS5e_RPS7o"/>
    <property type="match status" value="1"/>
</dbReference>
<dbReference type="SUPFAM" id="SSF47973">
    <property type="entry name" value="Ribosomal protein S7"/>
    <property type="match status" value="1"/>
</dbReference>
<dbReference type="PROSITE" id="PS00052">
    <property type="entry name" value="RIBOSOMAL_S7"/>
    <property type="match status" value="1"/>
</dbReference>
<evidence type="ECO:0000255" key="1">
    <source>
        <dbReference type="HAMAP-Rule" id="MF_00480"/>
    </source>
</evidence>
<evidence type="ECO:0000305" key="2"/>
<proteinExistence type="inferred from homology"/>
<feature type="chain" id="PRO_1000014154" description="Small ribosomal subunit protein uS7">
    <location>
        <begin position="1"/>
        <end position="156"/>
    </location>
</feature>
<organism>
    <name type="scientific">Burkholderia orbicola (strain AU 1054)</name>
    <dbReference type="NCBI Taxonomy" id="331271"/>
    <lineage>
        <taxon>Bacteria</taxon>
        <taxon>Pseudomonadati</taxon>
        <taxon>Pseudomonadota</taxon>
        <taxon>Betaproteobacteria</taxon>
        <taxon>Burkholderiales</taxon>
        <taxon>Burkholderiaceae</taxon>
        <taxon>Burkholderia</taxon>
        <taxon>Burkholderia cepacia complex</taxon>
        <taxon>Burkholderia orbicola</taxon>
    </lineage>
</organism>
<keyword id="KW-0687">Ribonucleoprotein</keyword>
<keyword id="KW-0689">Ribosomal protein</keyword>
<keyword id="KW-0694">RNA-binding</keyword>
<keyword id="KW-0699">rRNA-binding</keyword>
<keyword id="KW-0820">tRNA-binding</keyword>
<protein>
    <recommendedName>
        <fullName evidence="1">Small ribosomal subunit protein uS7</fullName>
    </recommendedName>
    <alternativeName>
        <fullName evidence="2">30S ribosomal protein S7</fullName>
    </alternativeName>
</protein>